<comment type="function">
    <text evidence="2 4 6 10">Essential component of the SCF (SKP1-CUL1-F-box protein) ubiquitin ligase complex, which mediates the ubiquitination of proteins involved in cell cycle progression, signal transduction and transcription. In the SCF complex, serves as an adapter that links the F-box protein to CUL1. The functional specificity of the SCF complex depends on the F-box protein as substrate recognition component. SCF(BTRC) and SCF(FBXW11) direct ubiquitination of CTNNB1 and participate in Wnt signaling. SCF(FBXW11) directs ubiquitination of phosphorylated NFKBIA. SCF(BTRC) directs ubiquitination of NFKBIB, NFKBIE, ATF4, SMAD3, SMAD4, CDC25A, FBXO5, CEP68 and probably NFKB2. SCF(SKP2) directs ubiquitination of phosphorylated CDKN1B/p27kip and is involved in regulation of G1/S transition. SCF(SKP2) directs ubiquitination of ORC1, CDT1, RBL2, ELF4, CDKN1A, RAG2, FOXO1A, and probably MYC and TAL1. SCF(FBXW7) directs ubiquitination of cyclin E, NOTCH1 released notch intracellular domain (NICD), and probably PSEN1. SCF(FBXW2) directs ubiquitination of GCM1. SCF(FBXO32) directs ubiquitination of MYOD1. SCF(FBXO7) directs ubiquitination of BIRC2 and DLGAP5. SCF(FBXO33) directs ubiquitination of YBX1. SCF(FBXO11) directs ubiquitination of BCL6 and DTL but does not seem to direct ubiquitination of TP53. SCF(BTRC) mediates the ubiquitination of NFKBIA at 'Lys-21' and 'Lys-22'; the degradation frees the associated NFKB1-RELA dimer to translocate into the nucleus and to activate transcription. SCF(CCNF) directs ubiquitination of CCP110. SCF(FBXL3) and SCF(FBXL21) direct ubiquitination of CRY1 and CRY2. SCF(FBXO9) directs ubiquitination of TTI1 and TELO2 (By similarity). Core component of the Cul7-RING(FBXW8) ubiquitin ligase complex, which mediates the ubiquitination and subsequent proteasomal degradation of target proteins. Also acts as a core component of the Cul1-RING(FBXL4) ubiquitin ligase complex, which mediates the ubiquitination and subsequent proteasomal degradation of BNIP3 and BNIP3L (By similarity).</text>
</comment>
<comment type="pathway">
    <text>Protein modification; protein ubiquitination.</text>
</comment>
<comment type="subunit">
    <text evidence="2 4 5 6 7 8 10">Interacts with KDM2B, forming heterodimers (By similarity). The KDM2B-SKP1 heterodimeric complex interacts with the PCGF1-BCORL heterodimeric complex to form a homotetrameric polycomb repression complex 1 (PRC1.1) (By similarity). Component of multiple SCF (SKP1-CUL1-F-box) E3 ubiquitin-protein ligase complexes formed of CUL1, SKP1, RBX1 and a variable F-box domain-containing protein as substrate-specific subunit. Component of the SCF(FBXW11) complex containing FBXW11. Component of the SCF(SKP2) complex containing SKP2, in which it interacts directly with SKP1, SKP2 and RBX1. Component of the SCF(FBXW2) complex containing FBXw2. Component of the SCF(FBXO32) complex containing FBXO32. Component of the probable SCF(FBXO7) complex containing FBXO7. Component of the SCF(FBXO10) complex containing FBXO10. Component of the SCF(FBXO11) complex containing FBXO11. Component of the SCF(FBXO25) complex containing FBXO25. Component of the SCF(FBXO33) complex containing FBXO33. Component of the probable SCF(FBXO4) complex containing FBXO4. Component of the SCF(FBXO44) complex, composed of SKP1, CUL1 and FBXO44. Component of the SCF(BTRC) complex, composed of SKP1, CUL1 and BTRC. This complex binds phosphorylated NFKBIA. Part of a SCF complex consisting of CUL1, RBX1, SKP1 and FBXO2. Component of a SCF(SKP2)-like complex containing CUL1, SKP1, TRIM21 and SKP2. Component of the SCF(FBXO17) complex, composed of SKP1, CUL1 and FBXO17. Component of the SCF(FBXO27) complex, composed of SKP1, CUL1 and FBXO27. Component of the SCF(CCNF) complex consisting of CUL1, RBX1, SKP1 and CCNF. Component of the SCF(FBXL3) complex composed of CUL1, SKP1, RBX1 and FBXL3. Component of the SCF(FBXL21) complex composed of CUL1, SKP1, RBX1 and FBXL21. Component of the SCF(FBXO9) composed of CUL1, SKP1, RBX1 and FBXO9. Component of the SCF(FBXW7) composed of CUL1, SKP1, RBX1 and FBXW7. Component of the SCF(FBXO31) complex composed of CUL1, SKP1, RBX1 and FBXO31 (By similarity). Component of the SCF(FBXW15) complex containing FBXW15 (PubMed:23319590). Interacts with CEP68 (By similarity). Interacts with FBXW15 (PubMed:23319590). Interacts with NOTCH2 (By similarity). The SKP1-KDM2A and SKP1-KDM2B complexes interact with UBB (By similarity). Component of the Cul7-RING(FBXW8) complex consisting of CUL7, RBX1, SKP1 and FBXW8; within the complex interacts with FBXW8 (By similarity). Interacts with BCORL1 (By similarity). Interacts with FBXL4 (By similarity).</text>
</comment>
<comment type="interaction">
    <interactant intactId="EBI-1202363">
        <id>Q9WTX5</id>
    </interactant>
    <interactant intactId="EBI-16031930">
        <id>Q9QXW2</id>
        <label>Fbxw5</label>
    </interactant>
    <organismsDiffer>false</organismsDiffer>
    <experiments>2</experiments>
</comment>
<comment type="interaction">
    <interactant intactId="EBI-1202363">
        <id>Q9WTX5</id>
    </interactant>
    <interactant intactId="EBI-357187">
        <id>P62137</id>
        <label>Ppp1ca</label>
    </interactant>
    <organismsDiffer>false</organismsDiffer>
    <experiments>2</experiments>
</comment>
<comment type="interaction">
    <interactant intactId="EBI-1202363">
        <id>Q9WTX5</id>
    </interactant>
    <interactant intactId="EBI-927321">
        <id>Q9CQJ4</id>
        <label>Rnf2</label>
    </interactant>
    <organismsDiffer>false</organismsDiffer>
    <experiments>4</experiments>
</comment>
<comment type="interaction">
    <interactant intactId="EBI-1202363">
        <id>Q9WTX5</id>
    </interactant>
    <interactant intactId="EBI-2557269">
        <id>Q9UKT7</id>
        <label>FBXL3</label>
    </interactant>
    <organismsDiffer>true</organismsDiffer>
    <experiments>4</experiments>
</comment>
<comment type="PTM">
    <text evidence="9">Undergoes autophagy-mediated degradation in the liver in a time-dependent manner.</text>
</comment>
<comment type="similarity">
    <text evidence="12">Belongs to the SKP1 family.</text>
</comment>
<keyword id="KW-1017">Isopeptide bond</keyword>
<keyword id="KW-0597">Phosphoprotein</keyword>
<keyword id="KW-1185">Reference proteome</keyword>
<keyword id="KW-0832">Ubl conjugation</keyword>
<keyword id="KW-0833">Ubl conjugation pathway</keyword>
<evidence type="ECO:0000250" key="1"/>
<evidence type="ECO:0000250" key="2">
    <source>
        <dbReference type="UniProtKB" id="P63208"/>
    </source>
</evidence>
<evidence type="ECO:0000256" key="3">
    <source>
        <dbReference type="SAM" id="MobiDB-lite"/>
    </source>
</evidence>
<evidence type="ECO:0000269" key="4">
    <source>
    </source>
</evidence>
<evidence type="ECO:0000269" key="5">
    <source>
    </source>
</evidence>
<evidence type="ECO:0000269" key="6">
    <source>
    </source>
</evidence>
<evidence type="ECO:0000269" key="7">
    <source>
    </source>
</evidence>
<evidence type="ECO:0000269" key="8">
    <source>
    </source>
</evidence>
<evidence type="ECO:0000269" key="9">
    <source>
    </source>
</evidence>
<evidence type="ECO:0000269" key="10">
    <source>
    </source>
</evidence>
<evidence type="ECO:0000303" key="11">
    <source>
    </source>
</evidence>
<evidence type="ECO:0000305" key="12"/>
<evidence type="ECO:0000312" key="13">
    <source>
        <dbReference type="MGI" id="MGI:103575"/>
    </source>
</evidence>
<evidence type="ECO:0007744" key="14">
    <source>
    </source>
</evidence>
<name>SKP1_MOUSE</name>
<gene>
    <name evidence="11 13" type="primary">Skp1</name>
    <name evidence="13" type="synonym">Skp1a</name>
</gene>
<reference key="1">
    <citation type="journal article" date="1999" name="Proc. Natl. Acad. Sci. U.S.A.">
        <title>Ubiquitin-dependent degradation of IkappaBalpha is mediated by a ubiquitin ligase Skp1/Cul 1/F-box protein FWD1.</title>
        <authorList>
            <person name="Hatakeyama S."/>
            <person name="Kitagawa M."/>
            <person name="Nakayama K."/>
            <person name="Shirane M."/>
            <person name="Matsumoto M."/>
            <person name="Hattori K."/>
            <person name="Higashi H."/>
            <person name="Nakano H."/>
            <person name="Okumura K."/>
            <person name="Onoe K."/>
            <person name="Good R.A."/>
            <person name="Nakayama K."/>
        </authorList>
    </citation>
    <scope>NUCLEOTIDE SEQUENCE [MRNA]</scope>
    <scope>FUNCTION</scope>
    <scope>IDENTIFICATION IN A COMPLEX WITH CUL1; PHOSPHORYLATED NFKBIA AND BTRC</scope>
    <source>
        <strain>C57BL/6J</strain>
    </source>
</reference>
<reference key="2">
    <citation type="journal article" date="2005" name="Science">
        <title>The transcriptional landscape of the mammalian genome.</title>
        <authorList>
            <person name="Carninci P."/>
            <person name="Kasukawa T."/>
            <person name="Katayama S."/>
            <person name="Gough J."/>
            <person name="Frith M.C."/>
            <person name="Maeda N."/>
            <person name="Oyama R."/>
            <person name="Ravasi T."/>
            <person name="Lenhard B."/>
            <person name="Wells C."/>
            <person name="Kodzius R."/>
            <person name="Shimokawa K."/>
            <person name="Bajic V.B."/>
            <person name="Brenner S.E."/>
            <person name="Batalov S."/>
            <person name="Forrest A.R."/>
            <person name="Zavolan M."/>
            <person name="Davis M.J."/>
            <person name="Wilming L.G."/>
            <person name="Aidinis V."/>
            <person name="Allen J.E."/>
            <person name="Ambesi-Impiombato A."/>
            <person name="Apweiler R."/>
            <person name="Aturaliya R.N."/>
            <person name="Bailey T.L."/>
            <person name="Bansal M."/>
            <person name="Baxter L."/>
            <person name="Beisel K.W."/>
            <person name="Bersano T."/>
            <person name="Bono H."/>
            <person name="Chalk A.M."/>
            <person name="Chiu K.P."/>
            <person name="Choudhary V."/>
            <person name="Christoffels A."/>
            <person name="Clutterbuck D.R."/>
            <person name="Crowe M.L."/>
            <person name="Dalla E."/>
            <person name="Dalrymple B.P."/>
            <person name="de Bono B."/>
            <person name="Della Gatta G."/>
            <person name="di Bernardo D."/>
            <person name="Down T."/>
            <person name="Engstrom P."/>
            <person name="Fagiolini M."/>
            <person name="Faulkner G."/>
            <person name="Fletcher C.F."/>
            <person name="Fukushima T."/>
            <person name="Furuno M."/>
            <person name="Futaki S."/>
            <person name="Gariboldi M."/>
            <person name="Georgii-Hemming P."/>
            <person name="Gingeras T.R."/>
            <person name="Gojobori T."/>
            <person name="Green R.E."/>
            <person name="Gustincich S."/>
            <person name="Harbers M."/>
            <person name="Hayashi Y."/>
            <person name="Hensch T.K."/>
            <person name="Hirokawa N."/>
            <person name="Hill D."/>
            <person name="Huminiecki L."/>
            <person name="Iacono M."/>
            <person name="Ikeo K."/>
            <person name="Iwama A."/>
            <person name="Ishikawa T."/>
            <person name="Jakt M."/>
            <person name="Kanapin A."/>
            <person name="Katoh M."/>
            <person name="Kawasawa Y."/>
            <person name="Kelso J."/>
            <person name="Kitamura H."/>
            <person name="Kitano H."/>
            <person name="Kollias G."/>
            <person name="Krishnan S.P."/>
            <person name="Kruger A."/>
            <person name="Kummerfeld S.K."/>
            <person name="Kurochkin I.V."/>
            <person name="Lareau L.F."/>
            <person name="Lazarevic D."/>
            <person name="Lipovich L."/>
            <person name="Liu J."/>
            <person name="Liuni S."/>
            <person name="McWilliam S."/>
            <person name="Madan Babu M."/>
            <person name="Madera M."/>
            <person name="Marchionni L."/>
            <person name="Matsuda H."/>
            <person name="Matsuzawa S."/>
            <person name="Miki H."/>
            <person name="Mignone F."/>
            <person name="Miyake S."/>
            <person name="Morris K."/>
            <person name="Mottagui-Tabar S."/>
            <person name="Mulder N."/>
            <person name="Nakano N."/>
            <person name="Nakauchi H."/>
            <person name="Ng P."/>
            <person name="Nilsson R."/>
            <person name="Nishiguchi S."/>
            <person name="Nishikawa S."/>
            <person name="Nori F."/>
            <person name="Ohara O."/>
            <person name="Okazaki Y."/>
            <person name="Orlando V."/>
            <person name="Pang K.C."/>
            <person name="Pavan W.J."/>
            <person name="Pavesi G."/>
            <person name="Pesole G."/>
            <person name="Petrovsky N."/>
            <person name="Piazza S."/>
            <person name="Reed J."/>
            <person name="Reid J.F."/>
            <person name="Ring B.Z."/>
            <person name="Ringwald M."/>
            <person name="Rost B."/>
            <person name="Ruan Y."/>
            <person name="Salzberg S.L."/>
            <person name="Sandelin A."/>
            <person name="Schneider C."/>
            <person name="Schoenbach C."/>
            <person name="Sekiguchi K."/>
            <person name="Semple C.A."/>
            <person name="Seno S."/>
            <person name="Sessa L."/>
            <person name="Sheng Y."/>
            <person name="Shibata Y."/>
            <person name="Shimada H."/>
            <person name="Shimada K."/>
            <person name="Silva D."/>
            <person name="Sinclair B."/>
            <person name="Sperling S."/>
            <person name="Stupka E."/>
            <person name="Sugiura K."/>
            <person name="Sultana R."/>
            <person name="Takenaka Y."/>
            <person name="Taki K."/>
            <person name="Tammoja K."/>
            <person name="Tan S.L."/>
            <person name="Tang S."/>
            <person name="Taylor M.S."/>
            <person name="Tegner J."/>
            <person name="Teichmann S.A."/>
            <person name="Ueda H.R."/>
            <person name="van Nimwegen E."/>
            <person name="Verardo R."/>
            <person name="Wei C.L."/>
            <person name="Yagi K."/>
            <person name="Yamanishi H."/>
            <person name="Zabarovsky E."/>
            <person name="Zhu S."/>
            <person name="Zimmer A."/>
            <person name="Hide W."/>
            <person name="Bult C."/>
            <person name="Grimmond S.M."/>
            <person name="Teasdale R.D."/>
            <person name="Liu E.T."/>
            <person name="Brusic V."/>
            <person name="Quackenbush J."/>
            <person name="Wahlestedt C."/>
            <person name="Mattick J.S."/>
            <person name="Hume D.A."/>
            <person name="Kai C."/>
            <person name="Sasaki D."/>
            <person name="Tomaru Y."/>
            <person name="Fukuda S."/>
            <person name="Kanamori-Katayama M."/>
            <person name="Suzuki M."/>
            <person name="Aoki J."/>
            <person name="Arakawa T."/>
            <person name="Iida J."/>
            <person name="Imamura K."/>
            <person name="Itoh M."/>
            <person name="Kato T."/>
            <person name="Kawaji H."/>
            <person name="Kawagashira N."/>
            <person name="Kawashima T."/>
            <person name="Kojima M."/>
            <person name="Kondo S."/>
            <person name="Konno H."/>
            <person name="Nakano K."/>
            <person name="Ninomiya N."/>
            <person name="Nishio T."/>
            <person name="Okada M."/>
            <person name="Plessy C."/>
            <person name="Shibata K."/>
            <person name="Shiraki T."/>
            <person name="Suzuki S."/>
            <person name="Tagami M."/>
            <person name="Waki K."/>
            <person name="Watahiki A."/>
            <person name="Okamura-Oho Y."/>
            <person name="Suzuki H."/>
            <person name="Kawai J."/>
            <person name="Hayashizaki Y."/>
        </authorList>
    </citation>
    <scope>NUCLEOTIDE SEQUENCE [LARGE SCALE MRNA]</scope>
    <source>
        <strain>C57BL/6J</strain>
        <strain>NOD</strain>
        <tissue>Brain</tissue>
        <tissue>Head</tissue>
        <tissue>Kidney</tissue>
        <tissue>Olfactory bulb</tissue>
        <tissue>Thymus</tissue>
    </source>
</reference>
<reference key="3">
    <citation type="journal article" date="2004" name="Genome Res.">
        <title>The status, quality, and expansion of the NIH full-length cDNA project: the Mammalian Gene Collection (MGC).</title>
        <authorList>
            <consortium name="The MGC Project Team"/>
        </authorList>
    </citation>
    <scope>NUCLEOTIDE SEQUENCE [LARGE SCALE MRNA]</scope>
    <source>
        <strain>FVB/N</strain>
        <tissue>Mammary tumor</tissue>
    </source>
</reference>
<reference key="4">
    <citation type="journal article" date="1999" name="Genes Dev.">
        <title>Signal-induced ubiquitination of IkappaBalpha by the F-box protein Slimb/beta-TrCP.</title>
        <authorList>
            <person name="Spencer E."/>
            <person name="Jiang J."/>
            <person name="Chen Z.J."/>
        </authorList>
    </citation>
    <scope>FUNCTION</scope>
    <scope>IDENTIFICATION IN A COMPLEX WITH PHOSPHORYLATED NFKBIA; BTRC AND RELA</scope>
</reference>
<reference key="5">
    <citation type="journal article" date="2001" name="Genomics">
        <title>Characterization of a mouse gene (Fbxw6) that encodes a homologue of Caenorhabditis elegans SEL-10.</title>
        <authorList>
            <person name="Maruyama S."/>
            <person name="Hatakeyama S."/>
            <person name="Nakayama K."/>
            <person name="Ishida N."/>
            <person name="Kawakami K."/>
            <person name="Nakayama K."/>
        </authorList>
    </citation>
    <scope>IDENTIFICATION IN A COMPLEX WITH BTRC AND CUL1</scope>
</reference>
<reference key="6">
    <citation type="journal article" date="2002" name="Nature">
        <title>E3 ubiquitin ligase that recognizes sugar chains.</title>
        <authorList>
            <person name="Yoshida Y."/>
            <person name="Chiba T."/>
            <person name="Tokunaga F."/>
            <person name="Kawasaki H."/>
            <person name="Iwai K."/>
            <person name="Suzuki T."/>
            <person name="Ito Y."/>
            <person name="Matsuoka K."/>
            <person name="Yoshida M."/>
            <person name="Tanaka K."/>
            <person name="Tai T."/>
        </authorList>
    </citation>
    <scope>FUNCTION</scope>
    <scope>SUBUNIT</scope>
    <scope>IDENTIFICATION BY MASS SPECTROMETRY</scope>
</reference>
<reference key="7">
    <citation type="journal article" date="2010" name="Cell">
        <title>A tissue-specific atlas of mouse protein phosphorylation and expression.</title>
        <authorList>
            <person name="Huttlin E.L."/>
            <person name="Jedrychowski M.P."/>
            <person name="Elias J.E."/>
            <person name="Goswami T."/>
            <person name="Rad R."/>
            <person name="Beausoleil S.A."/>
            <person name="Villen J."/>
            <person name="Haas W."/>
            <person name="Sowa M.E."/>
            <person name="Gygi S.P."/>
        </authorList>
    </citation>
    <scope>PHOSPHORYLATION [LARGE SCALE ANALYSIS] AT THR-131</scope>
    <scope>IDENTIFICATION BY MASS SPECTROMETRY [LARGE SCALE ANALYSIS]</scope>
    <source>
        <tissue>Brain</tissue>
        <tissue>Brown adipose tissue</tissue>
        <tissue>Heart</tissue>
        <tissue>Kidney</tissue>
        <tissue>Liver</tissue>
        <tissue>Lung</tissue>
        <tissue>Pancreas</tissue>
        <tissue>Spleen</tissue>
        <tissue>Testis</tissue>
    </source>
</reference>
<reference key="8">
    <citation type="journal article" date="2010" name="J. Biol. Chem.">
        <title>Fbxo45, a novel ubiquitin ligase, regulates synaptic activity.</title>
        <authorList>
            <person name="Tada H."/>
            <person name="Okano H.J."/>
            <person name="Takagi H."/>
            <person name="Shibata S."/>
            <person name="Yao I."/>
            <person name="Matsumoto M."/>
            <person name="Saiga T."/>
            <person name="Nakayama K.I."/>
            <person name="Kashima H."/>
            <person name="Takahashi T."/>
            <person name="Setou M."/>
            <person name="Okano H."/>
        </authorList>
    </citation>
    <scope>INTERACTION WITH FBXO45</scope>
</reference>
<reference key="9">
    <citation type="journal article" date="2013" name="J. Biol. Chem.">
        <title>SCF(Fbxw15) mediates histone acetyltransferase binding to origin recognition complex (HBO1) ubiquitin-proteasomal degradation to regulate cell proliferation.</title>
        <authorList>
            <person name="Zou C."/>
            <person name="Chen Y."/>
            <person name="Smith R.M."/>
            <person name="Snavely C."/>
            <person name="Li J."/>
            <person name="Coon T.A."/>
            <person name="Chen B.B."/>
            <person name="Zhao Y."/>
            <person name="Mallampalli R.K."/>
        </authorList>
    </citation>
    <scope>IDENTIFICATION IN AN SCF COMPLEX</scope>
    <scope>INTERACTION WITH FBXW15</scope>
</reference>
<reference key="10">
    <citation type="journal article" date="2018" name="Cell Metab.">
        <title>Autophagy regulates the liver clock and glucose metabolism by degrading CRY1.</title>
        <authorList>
            <person name="Toledo M."/>
            <person name="Batista-Gonzalez A."/>
            <person name="Merheb E."/>
            <person name="Aoun M.L."/>
            <person name="Tarabra E."/>
            <person name="Feng D."/>
            <person name="Sarparanta J."/>
            <person name="Merlo P."/>
            <person name="Botre F."/>
            <person name="Schwartz G.J."/>
            <person name="Pessin J.E."/>
            <person name="Singh R."/>
        </authorList>
    </citation>
    <scope>DEGRADATION VIA AUTOPHAGY</scope>
</reference>
<dbReference type="EMBL" id="AF083214">
    <property type="protein sequence ID" value="AAD16036.1"/>
    <property type="molecule type" value="mRNA"/>
</dbReference>
<dbReference type="EMBL" id="AK002983">
    <property type="protein sequence ID" value="BAB22496.1"/>
    <property type="molecule type" value="mRNA"/>
</dbReference>
<dbReference type="EMBL" id="AK010628">
    <property type="protein sequence ID" value="BAB27074.1"/>
    <property type="molecule type" value="mRNA"/>
</dbReference>
<dbReference type="EMBL" id="AK012498">
    <property type="protein sequence ID" value="BAB28281.1"/>
    <property type="molecule type" value="mRNA"/>
</dbReference>
<dbReference type="EMBL" id="AK014245">
    <property type="protein sequence ID" value="BAB29222.1"/>
    <property type="molecule type" value="mRNA"/>
</dbReference>
<dbReference type="EMBL" id="AK027909">
    <property type="protein sequence ID" value="BAC25660.1"/>
    <property type="molecule type" value="mRNA"/>
</dbReference>
<dbReference type="EMBL" id="AK078330">
    <property type="protein sequence ID" value="BAC37220.1"/>
    <property type="molecule type" value="mRNA"/>
</dbReference>
<dbReference type="EMBL" id="AK088339">
    <property type="protein sequence ID" value="BAC40292.1"/>
    <property type="molecule type" value="mRNA"/>
</dbReference>
<dbReference type="EMBL" id="BC002115">
    <property type="protein sequence ID" value="AAH02115.1"/>
    <property type="molecule type" value="mRNA"/>
</dbReference>
<dbReference type="CCDS" id="CCDS24669.1"/>
<dbReference type="RefSeq" id="NP_035673.3">
    <property type="nucleotide sequence ID" value="NM_011543.4"/>
</dbReference>
<dbReference type="RefSeq" id="XP_006532849.1">
    <property type="nucleotide sequence ID" value="XM_006532786.2"/>
</dbReference>
<dbReference type="SMR" id="Q9WTX5"/>
<dbReference type="BioGRID" id="203998">
    <property type="interactions" value="110"/>
</dbReference>
<dbReference type="CORUM" id="Q9WTX5"/>
<dbReference type="DIP" id="DIP-38596N"/>
<dbReference type="FunCoup" id="Q9WTX5">
    <property type="interactions" value="3580"/>
</dbReference>
<dbReference type="IntAct" id="Q9WTX5">
    <property type="interactions" value="54"/>
</dbReference>
<dbReference type="MINT" id="Q9WTX5"/>
<dbReference type="STRING" id="10090.ENSMUSP00000104700"/>
<dbReference type="GlyGen" id="Q9WTX5">
    <property type="glycosylation" value="1 site, 1 O-linked glycan (1 site)"/>
</dbReference>
<dbReference type="iPTMnet" id="Q9WTX5"/>
<dbReference type="PhosphoSitePlus" id="Q9WTX5"/>
<dbReference type="SwissPalm" id="Q9WTX5"/>
<dbReference type="REPRODUCTION-2DPAGE" id="Q9WTX5"/>
<dbReference type="jPOST" id="Q9WTX5"/>
<dbReference type="PaxDb" id="10090-ENSMUSP00000038744"/>
<dbReference type="ProteomicsDB" id="261188"/>
<dbReference type="Pumba" id="Q9WTX5"/>
<dbReference type="Antibodypedia" id="4566">
    <property type="antibodies" value="561 antibodies from 40 providers"/>
</dbReference>
<dbReference type="DNASU" id="21402"/>
<dbReference type="Ensembl" id="ENSMUST00000037324.12">
    <property type="protein sequence ID" value="ENSMUSP00000038744.6"/>
    <property type="gene ID" value="ENSMUSG00000036309.15"/>
</dbReference>
<dbReference type="Ensembl" id="ENSMUST00000109072.2">
    <property type="protein sequence ID" value="ENSMUSP00000104700.2"/>
    <property type="gene ID" value="ENSMUSG00000036309.15"/>
</dbReference>
<dbReference type="GeneID" id="21402"/>
<dbReference type="KEGG" id="mmu:21402"/>
<dbReference type="UCSC" id="uc007ivf.2">
    <property type="organism name" value="mouse"/>
</dbReference>
<dbReference type="AGR" id="MGI:103575"/>
<dbReference type="CTD" id="6500"/>
<dbReference type="MGI" id="MGI:103575">
    <property type="gene designation" value="Skp1"/>
</dbReference>
<dbReference type="VEuPathDB" id="HostDB:ENSMUSG00000036309"/>
<dbReference type="eggNOG" id="KOG1724">
    <property type="taxonomic scope" value="Eukaryota"/>
</dbReference>
<dbReference type="GeneTree" id="ENSGT00390000012652"/>
<dbReference type="InParanoid" id="Q9WTX5"/>
<dbReference type="OMA" id="LHIEYSC"/>
<dbReference type="OrthoDB" id="2342932at2759"/>
<dbReference type="PhylomeDB" id="Q9WTX5"/>
<dbReference type="TreeFam" id="TF354233"/>
<dbReference type="Reactome" id="R-MMU-1169091">
    <property type="pathway name" value="Activation of NF-kappaB in B cells"/>
</dbReference>
<dbReference type="Reactome" id="R-MMU-1170546">
    <property type="pathway name" value="Prolactin receptor signaling"/>
</dbReference>
<dbReference type="Reactome" id="R-MMU-174113">
    <property type="pathway name" value="SCF-beta-TrCP mediated degradation of Emi1"/>
</dbReference>
<dbReference type="Reactome" id="R-MMU-187577">
    <property type="pathway name" value="SCF(Skp2)-mediated degradation of p27/p21"/>
</dbReference>
<dbReference type="Reactome" id="R-MMU-195253">
    <property type="pathway name" value="Degradation of beta-catenin by the destruction complex"/>
</dbReference>
<dbReference type="Reactome" id="R-MMU-202424">
    <property type="pathway name" value="Downstream TCR signaling"/>
</dbReference>
<dbReference type="Reactome" id="R-MMU-2565942">
    <property type="pathway name" value="Regulation of PLK1 Activity at G2/M Transition"/>
</dbReference>
<dbReference type="Reactome" id="R-MMU-2871837">
    <property type="pathway name" value="FCERI mediated NF-kB activation"/>
</dbReference>
<dbReference type="Reactome" id="R-MMU-5607761">
    <property type="pathway name" value="Dectin-1 mediated noncanonical NF-kB signaling"/>
</dbReference>
<dbReference type="Reactome" id="R-MMU-5607764">
    <property type="pathway name" value="CLEC7A (Dectin-1) signaling"/>
</dbReference>
<dbReference type="Reactome" id="R-MMU-5610780">
    <property type="pathway name" value="Degradation of GLI1 by the proteasome"/>
</dbReference>
<dbReference type="Reactome" id="R-MMU-5610785">
    <property type="pathway name" value="GLI3 is processed to GLI3R by the proteasome"/>
</dbReference>
<dbReference type="Reactome" id="R-MMU-5676590">
    <property type="pathway name" value="NIK--&gt;noncanonical NF-kB signaling"/>
</dbReference>
<dbReference type="Reactome" id="R-MMU-5684264">
    <property type="pathway name" value="MAP3K8 (TPL2)-dependent MAPK1/3 activation"/>
</dbReference>
<dbReference type="Reactome" id="R-MMU-68949">
    <property type="pathway name" value="Orc1 removal from chromatin"/>
</dbReference>
<dbReference type="Reactome" id="R-MMU-69231">
    <property type="pathway name" value="Cyclin D associated events in G1"/>
</dbReference>
<dbReference type="Reactome" id="R-MMU-8854050">
    <property type="pathway name" value="FBXL7 down-regulates AURKA during mitotic entry and in early mitosis"/>
</dbReference>
<dbReference type="Reactome" id="R-MMU-8939902">
    <property type="pathway name" value="Regulation of RUNX2 expression and activity"/>
</dbReference>
<dbReference type="Reactome" id="R-MMU-8951664">
    <property type="pathway name" value="Neddylation"/>
</dbReference>
<dbReference type="Reactome" id="R-MMU-9020702">
    <property type="pathway name" value="Interleukin-1 signaling"/>
</dbReference>
<dbReference type="Reactome" id="R-MMU-917937">
    <property type="pathway name" value="Iron uptake and transport"/>
</dbReference>
<dbReference type="Reactome" id="R-MMU-9708530">
    <property type="pathway name" value="Regulation of BACH1 activity"/>
</dbReference>
<dbReference type="Reactome" id="R-MMU-9762114">
    <property type="pathway name" value="GSK3B and BTRC:CUL1-mediated-degradation of NFE2L2"/>
</dbReference>
<dbReference type="Reactome" id="R-MMU-983168">
    <property type="pathway name" value="Antigen processing: Ubiquitination &amp; Proteasome degradation"/>
</dbReference>
<dbReference type="UniPathway" id="UPA00143"/>
<dbReference type="BioGRID-ORCS" id="21402">
    <property type="hits" value="23 hits in 76 CRISPR screens"/>
</dbReference>
<dbReference type="CD-CODE" id="CE726F99">
    <property type="entry name" value="Postsynaptic density"/>
</dbReference>
<dbReference type="ChiTaRS" id="Skp1a">
    <property type="organism name" value="mouse"/>
</dbReference>
<dbReference type="PRO" id="PR:Q9WTX5"/>
<dbReference type="Proteomes" id="UP000000589">
    <property type="component" value="Chromosome 11"/>
</dbReference>
<dbReference type="RNAct" id="Q9WTX5">
    <property type="molecule type" value="protein"/>
</dbReference>
<dbReference type="Bgee" id="ENSMUSG00000036309">
    <property type="expression patterns" value="Expressed in vestibular membrane of cochlear duct and 264 other cell types or tissues"/>
</dbReference>
<dbReference type="ExpressionAtlas" id="Q9WTX5">
    <property type="expression patterns" value="baseline and differential"/>
</dbReference>
<dbReference type="GO" id="GO:0005813">
    <property type="term" value="C:centrosome"/>
    <property type="evidence" value="ECO:0000314"/>
    <property type="project" value="CACAO"/>
</dbReference>
<dbReference type="GO" id="GO:0031467">
    <property type="term" value="C:Cul7-RING ubiquitin ligase complex"/>
    <property type="evidence" value="ECO:0000314"/>
    <property type="project" value="UniProtKB"/>
</dbReference>
<dbReference type="GO" id="GO:0005829">
    <property type="term" value="C:cytosol"/>
    <property type="evidence" value="ECO:0000314"/>
    <property type="project" value="UniProtKB"/>
</dbReference>
<dbReference type="GO" id="GO:0031519">
    <property type="term" value="C:PcG protein complex"/>
    <property type="evidence" value="ECO:0007669"/>
    <property type="project" value="Ensembl"/>
</dbReference>
<dbReference type="GO" id="GO:0019005">
    <property type="term" value="C:SCF ubiquitin ligase complex"/>
    <property type="evidence" value="ECO:0000314"/>
    <property type="project" value="UniProtKB"/>
</dbReference>
<dbReference type="GO" id="GO:0008013">
    <property type="term" value="F:beta-catenin binding"/>
    <property type="evidence" value="ECO:0007669"/>
    <property type="project" value="Ensembl"/>
</dbReference>
<dbReference type="GO" id="GO:0097602">
    <property type="term" value="F:cullin family protein binding"/>
    <property type="evidence" value="ECO:0007669"/>
    <property type="project" value="Ensembl"/>
</dbReference>
<dbReference type="GO" id="GO:1990444">
    <property type="term" value="F:F-box domain binding"/>
    <property type="evidence" value="ECO:0007669"/>
    <property type="project" value="Ensembl"/>
</dbReference>
<dbReference type="GO" id="GO:0140677">
    <property type="term" value="F:molecular function activator activity"/>
    <property type="evidence" value="ECO:0007669"/>
    <property type="project" value="Ensembl"/>
</dbReference>
<dbReference type="GO" id="GO:0160072">
    <property type="term" value="F:ubiquitin ligase complex scaffold activity"/>
    <property type="evidence" value="ECO:0007669"/>
    <property type="project" value="Ensembl"/>
</dbReference>
<dbReference type="GO" id="GO:1990756">
    <property type="term" value="F:ubiquitin-like ligase-substrate adaptor activity"/>
    <property type="evidence" value="ECO:0007669"/>
    <property type="project" value="Ensembl"/>
</dbReference>
<dbReference type="GO" id="GO:0006338">
    <property type="term" value="P:chromatin remodeling"/>
    <property type="evidence" value="ECO:0007669"/>
    <property type="project" value="Ensembl"/>
</dbReference>
<dbReference type="GO" id="GO:0051457">
    <property type="term" value="P:maintenance of protein location in nucleus"/>
    <property type="evidence" value="ECO:0007669"/>
    <property type="project" value="Ensembl"/>
</dbReference>
<dbReference type="GO" id="GO:0070936">
    <property type="term" value="P:protein K48-linked ubiquitination"/>
    <property type="evidence" value="ECO:0000314"/>
    <property type="project" value="MGI"/>
</dbReference>
<dbReference type="GO" id="GO:0006513">
    <property type="term" value="P:protein monoubiquitination"/>
    <property type="evidence" value="ECO:0000316"/>
    <property type="project" value="MGI"/>
</dbReference>
<dbReference type="GO" id="GO:0031146">
    <property type="term" value="P:SCF-dependent proteasomal ubiquitin-dependent protein catabolic process"/>
    <property type="evidence" value="ECO:0000314"/>
    <property type="project" value="UniProtKB"/>
</dbReference>
<dbReference type="GO" id="GO:0006511">
    <property type="term" value="P:ubiquitin-dependent protein catabolic process"/>
    <property type="evidence" value="ECO:0000305"/>
    <property type="project" value="MGI"/>
</dbReference>
<dbReference type="CDD" id="cd18322">
    <property type="entry name" value="BTB_POZ_SKP1"/>
    <property type="match status" value="1"/>
</dbReference>
<dbReference type="FunFam" id="3.30.710.10:FF:000270">
    <property type="entry name" value="S-phase kinase-associated protein 1"/>
    <property type="match status" value="1"/>
</dbReference>
<dbReference type="Gene3D" id="3.30.710.10">
    <property type="entry name" value="Potassium Channel Kv1.1, Chain A"/>
    <property type="match status" value="1"/>
</dbReference>
<dbReference type="InterPro" id="IPR016897">
    <property type="entry name" value="SKP1"/>
</dbReference>
<dbReference type="InterPro" id="IPR001232">
    <property type="entry name" value="SKP1-like"/>
</dbReference>
<dbReference type="InterPro" id="IPR036296">
    <property type="entry name" value="SKP1-like_dim_sf"/>
</dbReference>
<dbReference type="InterPro" id="IPR011333">
    <property type="entry name" value="SKP1/BTB/POZ_sf"/>
</dbReference>
<dbReference type="InterPro" id="IPR016072">
    <property type="entry name" value="Skp1_comp_dimer"/>
</dbReference>
<dbReference type="InterPro" id="IPR016073">
    <property type="entry name" value="Skp1_comp_POZ"/>
</dbReference>
<dbReference type="PANTHER" id="PTHR11165">
    <property type="entry name" value="SKP1"/>
    <property type="match status" value="1"/>
</dbReference>
<dbReference type="Pfam" id="PF01466">
    <property type="entry name" value="Skp1"/>
    <property type="match status" value="1"/>
</dbReference>
<dbReference type="Pfam" id="PF03931">
    <property type="entry name" value="Skp1_POZ"/>
    <property type="match status" value="1"/>
</dbReference>
<dbReference type="PIRSF" id="PIRSF028729">
    <property type="entry name" value="E3_ubiquit_lig_SCF_Skp"/>
    <property type="match status" value="1"/>
</dbReference>
<dbReference type="SMART" id="SM00512">
    <property type="entry name" value="Skp1"/>
    <property type="match status" value="1"/>
</dbReference>
<dbReference type="SUPFAM" id="SSF54695">
    <property type="entry name" value="POZ domain"/>
    <property type="match status" value="1"/>
</dbReference>
<dbReference type="SUPFAM" id="SSF81382">
    <property type="entry name" value="Skp1 dimerisation domain-like"/>
    <property type="match status" value="1"/>
</dbReference>
<feature type="chain" id="PRO_0000187252" description="S-phase kinase-associated protein 1">
    <location>
        <begin position="1"/>
        <end position="163"/>
    </location>
</feature>
<feature type="region of interest" description="Disordered" evidence="3">
    <location>
        <begin position="63"/>
        <end position="83"/>
    </location>
</feature>
<feature type="region of interest" description="Interaction with the F-box domain of F-box proteins" evidence="1">
    <location>
        <begin position="104"/>
        <end position="163"/>
    </location>
</feature>
<feature type="modified residue" description="Phosphothreonine" evidence="14">
    <location>
        <position position="131"/>
    </location>
</feature>
<feature type="cross-link" description="Glycyl lysine isopeptide (Lys-Gly) (interchain with G-Cter in SUMO1)" evidence="2">
    <location>
        <position position="142"/>
    </location>
</feature>
<feature type="sequence conflict" description="In Ref. 2; BAC37220." evidence="12" ref="2">
    <original>D</original>
    <variation>N</variation>
    <location>
        <position position="41"/>
    </location>
</feature>
<sequence length="163" mass="18672">MPTIKLQSSDGEIFEVDVEIAKQSVTIKTMLEDLGMDDEGDDDPVPLPNVNAAILKKVIQWCTHHKDDPPPPEDDENKEKRTDDIPVWDQEFLKVDQGTLFELILAANYLDIKGLLDVTCKTVANMIKGKTPEEIRKTFNIKNDFTEEEEAQVRKENQWCEEK</sequence>
<proteinExistence type="evidence at protein level"/>
<accession>Q9WTX5</accession>
<accession>Q8C5H6</accession>
<organism>
    <name type="scientific">Mus musculus</name>
    <name type="common">Mouse</name>
    <dbReference type="NCBI Taxonomy" id="10090"/>
    <lineage>
        <taxon>Eukaryota</taxon>
        <taxon>Metazoa</taxon>
        <taxon>Chordata</taxon>
        <taxon>Craniata</taxon>
        <taxon>Vertebrata</taxon>
        <taxon>Euteleostomi</taxon>
        <taxon>Mammalia</taxon>
        <taxon>Eutheria</taxon>
        <taxon>Euarchontoglires</taxon>
        <taxon>Glires</taxon>
        <taxon>Rodentia</taxon>
        <taxon>Myomorpha</taxon>
        <taxon>Muroidea</taxon>
        <taxon>Muridae</taxon>
        <taxon>Murinae</taxon>
        <taxon>Mus</taxon>
        <taxon>Mus</taxon>
    </lineage>
</organism>
<protein>
    <recommendedName>
        <fullName>S-phase kinase-associated protein 1</fullName>
    </recommendedName>
    <alternativeName>
        <fullName>Cyclin-A/CDK2-associated protein p19</fullName>
    </alternativeName>
    <alternativeName>
        <fullName>S-phase kinase-associated protein 1A</fullName>
    </alternativeName>
    <alternativeName>
        <fullName>p19A</fullName>
    </alternativeName>
    <alternativeName>
        <fullName>p19skp1</fullName>
    </alternativeName>
</protein>